<comment type="function">
    <text evidence="1">Involved in the early part of the secretory pathway.</text>
</comment>
<comment type="subcellular location">
    <subcellularLocation>
        <location evidence="1">Golgi apparatus membrane</location>
        <topology evidence="1">Single-pass type I membrane protein</topology>
    </subcellularLocation>
</comment>
<comment type="similarity">
    <text evidence="3">Belongs to the KISH family.</text>
</comment>
<organism>
    <name type="scientific">Bos taurus</name>
    <name type="common">Bovine</name>
    <dbReference type="NCBI Taxonomy" id="9913"/>
    <lineage>
        <taxon>Eukaryota</taxon>
        <taxon>Metazoa</taxon>
        <taxon>Chordata</taxon>
        <taxon>Craniata</taxon>
        <taxon>Vertebrata</taxon>
        <taxon>Euteleostomi</taxon>
        <taxon>Mammalia</taxon>
        <taxon>Eutheria</taxon>
        <taxon>Laurasiatheria</taxon>
        <taxon>Artiodactyla</taxon>
        <taxon>Ruminantia</taxon>
        <taxon>Pecora</taxon>
        <taxon>Bovidae</taxon>
        <taxon>Bovinae</taxon>
        <taxon>Bos</taxon>
    </lineage>
</organism>
<dbReference type="EMBL" id="BC122587">
    <property type="protein sequence ID" value="AAI22588.1"/>
    <property type="molecule type" value="mRNA"/>
</dbReference>
<dbReference type="RefSeq" id="NP_001121975.1">
    <property type="nucleotide sequence ID" value="NM_001128503.1"/>
</dbReference>
<dbReference type="FunCoup" id="Q0IIL4">
    <property type="interactions" value="2081"/>
</dbReference>
<dbReference type="STRING" id="9913.ENSBTAP00000052551"/>
<dbReference type="PaxDb" id="9913-ENSBTAP00000052551"/>
<dbReference type="Ensembl" id="ENSBTAT00000056397.2">
    <property type="protein sequence ID" value="ENSBTAP00000052551.1"/>
    <property type="gene ID" value="ENSBTAG00000038979.3"/>
</dbReference>
<dbReference type="GeneID" id="613426"/>
<dbReference type="KEGG" id="bta:613426"/>
<dbReference type="CTD" id="56900"/>
<dbReference type="VEuPathDB" id="HostDB:ENSBTAG00000038979"/>
<dbReference type="VGNC" id="VGNC:35992">
    <property type="gene designation" value="TMEM167B"/>
</dbReference>
<dbReference type="eggNOG" id="KOG3808">
    <property type="taxonomic scope" value="Eukaryota"/>
</dbReference>
<dbReference type="GeneTree" id="ENSGT00940000162196"/>
<dbReference type="HOGENOM" id="CLU_152663_1_2_1"/>
<dbReference type="InParanoid" id="Q0IIL4"/>
<dbReference type="OMA" id="IVMAFYI"/>
<dbReference type="OrthoDB" id="10034655at2759"/>
<dbReference type="TreeFam" id="TF300138"/>
<dbReference type="Proteomes" id="UP000009136">
    <property type="component" value="Chromosome 3"/>
</dbReference>
<dbReference type="Bgee" id="ENSBTAG00000038979">
    <property type="expression patterns" value="Expressed in prostate gland and 106 other cell types or tissues"/>
</dbReference>
<dbReference type="GO" id="GO:0000139">
    <property type="term" value="C:Golgi membrane"/>
    <property type="evidence" value="ECO:0007669"/>
    <property type="project" value="UniProtKB-SubCell"/>
</dbReference>
<dbReference type="InterPro" id="IPR042863">
    <property type="entry name" value="Kish-B"/>
</dbReference>
<dbReference type="InterPro" id="IPR009653">
    <property type="entry name" value="Ksh1"/>
</dbReference>
<dbReference type="PANTHER" id="PTHR46815">
    <property type="entry name" value="PROTEIN KISH-B"/>
    <property type="match status" value="1"/>
</dbReference>
<dbReference type="PANTHER" id="PTHR46815:SF1">
    <property type="entry name" value="PROTEIN KISH-B"/>
    <property type="match status" value="1"/>
</dbReference>
<dbReference type="Pfam" id="PF06842">
    <property type="entry name" value="DUF1242"/>
    <property type="match status" value="1"/>
</dbReference>
<evidence type="ECO:0000250" key="1"/>
<evidence type="ECO:0000255" key="2"/>
<evidence type="ECO:0000305" key="3"/>
<sequence>MTNVYSLDGILVFGLLFVCTCAYFKKVPRLKTWLLSEKKGVWGVFYKAAVIGTRLHAAVAIACIVMAFYVLFIK</sequence>
<protein>
    <recommendedName>
        <fullName>Protein kish-B</fullName>
    </recommendedName>
    <alternativeName>
        <fullName>Transmembrane protein 167B</fullName>
    </alternativeName>
</protein>
<accession>Q0IIL4</accession>
<name>KISHB_BOVIN</name>
<proteinExistence type="inferred from homology"/>
<keyword id="KW-0333">Golgi apparatus</keyword>
<keyword id="KW-0472">Membrane</keyword>
<keyword id="KW-1185">Reference proteome</keyword>
<keyword id="KW-0732">Signal</keyword>
<keyword id="KW-0812">Transmembrane</keyword>
<keyword id="KW-1133">Transmembrane helix</keyword>
<feature type="signal peptide" evidence="2">
    <location>
        <begin position="1"/>
        <end position="22"/>
    </location>
</feature>
<feature type="chain" id="PRO_0000265080" description="Protein kish-B">
    <location>
        <begin position="23"/>
        <end position="74"/>
    </location>
</feature>
<feature type="topological domain" description="Extracellular" evidence="2">
    <location>
        <begin position="23"/>
        <end position="52"/>
    </location>
</feature>
<feature type="transmembrane region" description="Helical" evidence="2">
    <location>
        <begin position="53"/>
        <end position="73"/>
    </location>
</feature>
<feature type="topological domain" description="Cytoplasmic" evidence="2">
    <location>
        <position position="74"/>
    </location>
</feature>
<gene>
    <name type="primary">TMEM167B</name>
</gene>
<reference key="1">
    <citation type="submission" date="2006-08" db="EMBL/GenBank/DDBJ databases">
        <authorList>
            <consortium name="NIH - Mammalian Gene Collection (MGC) project"/>
        </authorList>
    </citation>
    <scope>NUCLEOTIDE SEQUENCE [LARGE SCALE MRNA]</scope>
    <source>
        <strain>Hereford</strain>
        <tissue>Thalamus</tissue>
    </source>
</reference>